<evidence type="ECO:0000250" key="1"/>
<evidence type="ECO:0000255" key="2"/>
<evidence type="ECO:0000255" key="3">
    <source>
        <dbReference type="PROSITE-ProRule" id="PRU00108"/>
    </source>
</evidence>
<evidence type="ECO:0000256" key="4">
    <source>
        <dbReference type="SAM" id="MobiDB-lite"/>
    </source>
</evidence>
<keyword id="KW-0175">Coiled coil</keyword>
<keyword id="KW-0217">Developmental protein</keyword>
<keyword id="KW-0238">DNA-binding</keyword>
<keyword id="KW-0371">Homeobox</keyword>
<keyword id="KW-0539">Nucleus</keyword>
<keyword id="KW-1185">Reference proteome</keyword>
<keyword id="KW-0804">Transcription</keyword>
<keyword id="KW-0805">Transcription regulation</keyword>
<accession>Q54VB4</accession>
<proteinExistence type="inferred from homology"/>
<organism>
    <name type="scientific">Dictyostelium discoideum</name>
    <name type="common">Social amoeba</name>
    <dbReference type="NCBI Taxonomy" id="44689"/>
    <lineage>
        <taxon>Eukaryota</taxon>
        <taxon>Amoebozoa</taxon>
        <taxon>Evosea</taxon>
        <taxon>Eumycetozoa</taxon>
        <taxon>Dictyostelia</taxon>
        <taxon>Dictyosteliales</taxon>
        <taxon>Dictyosteliaceae</taxon>
        <taxon>Dictyostelium</taxon>
    </lineage>
</organism>
<reference key="1">
    <citation type="journal article" date="2005" name="Nature">
        <title>The genome of the social amoeba Dictyostelium discoideum.</title>
        <authorList>
            <person name="Eichinger L."/>
            <person name="Pachebat J.A."/>
            <person name="Gloeckner G."/>
            <person name="Rajandream M.A."/>
            <person name="Sucgang R."/>
            <person name="Berriman M."/>
            <person name="Song J."/>
            <person name="Olsen R."/>
            <person name="Szafranski K."/>
            <person name="Xu Q."/>
            <person name="Tunggal B."/>
            <person name="Kummerfeld S."/>
            <person name="Madera M."/>
            <person name="Konfortov B.A."/>
            <person name="Rivero F."/>
            <person name="Bankier A.T."/>
            <person name="Lehmann R."/>
            <person name="Hamlin N."/>
            <person name="Davies R."/>
            <person name="Gaudet P."/>
            <person name="Fey P."/>
            <person name="Pilcher K."/>
            <person name="Chen G."/>
            <person name="Saunders D."/>
            <person name="Sodergren E.J."/>
            <person name="Davis P."/>
            <person name="Kerhornou A."/>
            <person name="Nie X."/>
            <person name="Hall N."/>
            <person name="Anjard C."/>
            <person name="Hemphill L."/>
            <person name="Bason N."/>
            <person name="Farbrother P."/>
            <person name="Desany B."/>
            <person name="Just E."/>
            <person name="Morio T."/>
            <person name="Rost R."/>
            <person name="Churcher C.M."/>
            <person name="Cooper J."/>
            <person name="Haydock S."/>
            <person name="van Driessche N."/>
            <person name="Cronin A."/>
            <person name="Goodhead I."/>
            <person name="Muzny D.M."/>
            <person name="Mourier T."/>
            <person name="Pain A."/>
            <person name="Lu M."/>
            <person name="Harper D."/>
            <person name="Lindsay R."/>
            <person name="Hauser H."/>
            <person name="James K.D."/>
            <person name="Quiles M."/>
            <person name="Madan Babu M."/>
            <person name="Saito T."/>
            <person name="Buchrieser C."/>
            <person name="Wardroper A."/>
            <person name="Felder M."/>
            <person name="Thangavelu M."/>
            <person name="Johnson D."/>
            <person name="Knights A."/>
            <person name="Loulseged H."/>
            <person name="Mungall K.L."/>
            <person name="Oliver K."/>
            <person name="Price C."/>
            <person name="Quail M.A."/>
            <person name="Urushihara H."/>
            <person name="Hernandez J."/>
            <person name="Rabbinowitsch E."/>
            <person name="Steffen D."/>
            <person name="Sanders M."/>
            <person name="Ma J."/>
            <person name="Kohara Y."/>
            <person name="Sharp S."/>
            <person name="Simmonds M.N."/>
            <person name="Spiegler S."/>
            <person name="Tivey A."/>
            <person name="Sugano S."/>
            <person name="White B."/>
            <person name="Walker D."/>
            <person name="Woodward J.R."/>
            <person name="Winckler T."/>
            <person name="Tanaka Y."/>
            <person name="Shaulsky G."/>
            <person name="Schleicher M."/>
            <person name="Weinstock G.M."/>
            <person name="Rosenthal A."/>
            <person name="Cox E.C."/>
            <person name="Chisholm R.L."/>
            <person name="Gibbs R.A."/>
            <person name="Loomis W.F."/>
            <person name="Platzer M."/>
            <person name="Kay R.R."/>
            <person name="Williams J.G."/>
            <person name="Dear P.H."/>
            <person name="Noegel A.A."/>
            <person name="Barrell B.G."/>
            <person name="Kuspa A."/>
        </authorList>
    </citation>
    <scope>NUCLEOTIDE SEQUENCE [LARGE SCALE GENOMIC DNA]</scope>
    <source>
        <strain>AX4</strain>
    </source>
</reference>
<gene>
    <name type="primary">hbx9</name>
    <name type="ORF">DDB_G0280473</name>
</gene>
<protein>
    <recommendedName>
        <fullName>Homeobox protein 9</fullName>
        <shortName>DdHbx-9</shortName>
    </recommendedName>
</protein>
<sequence>MLNSYSPLQSPSSSITLPPLFHINNNNNNNNNNNNNNGHNNDKQNVNKLGLKLNINGYDSGFSPFSPNHSIANNNNNNNNNNNNNNNNNNNNNNNNNNNNNNNNNNNIQSPKNNNSNNNKLNESCGSLNSSNDNNFNSGNDDNSLKRVRVFSNQNQNQNQNQNQNQNQNQNQNQNQNQNQKDSWNIHFGEIVNIVLELESVLSCKNENINQINQIKSSEKSMRSALYKKEIEILELKDKLNNSSATFNSLKVIQPIKLEKSPRTLNNSSDSISENINNNNNNNNNNNNNNNNNINESNINTSPTHELSGSSGTLGGYSKSHILSILDDLDSESSNISSDSEDDEQPRKVPRDLNYKPNNNINYANNNNNNNNNNNNNNHNNNINNNNNNNNNNNNNSNNYHHSIGSITNSVNIKPSKDQTSNDWAAATEALLNLHTNKNNNNNNNNNNNNNNNYHSNNNNYSNSPNTTPPYQNSNQQFNNNQPQSQQQQQSQQQQQQQQQYQNSINKNITTTTNNNNNNLTSSSNNQAVVYGNTSPNQSSANGNNENVIGVPFTGSIVKRKKRGKLPGEATSILKKWLFEHNMHPYPTEEEKVALANSTFLSFNQINNWFTNARRRILPRQLDRKVFGSPLFSHFSITK</sequence>
<dbReference type="EMBL" id="AAFI02000036">
    <property type="protein sequence ID" value="EAL67215.1"/>
    <property type="molecule type" value="Genomic_DNA"/>
</dbReference>
<dbReference type="RefSeq" id="XP_641195.1">
    <property type="nucleotide sequence ID" value="XM_636103.1"/>
</dbReference>
<dbReference type="SMR" id="Q54VB4"/>
<dbReference type="FunCoup" id="Q54VB4">
    <property type="interactions" value="399"/>
</dbReference>
<dbReference type="STRING" id="44689.Q54VB4"/>
<dbReference type="PaxDb" id="44689-DDB0220485"/>
<dbReference type="EnsemblProtists" id="EAL67215">
    <property type="protein sequence ID" value="EAL67215"/>
    <property type="gene ID" value="DDB_G0280473"/>
</dbReference>
<dbReference type="GeneID" id="8622576"/>
<dbReference type="KEGG" id="ddi:DDB_G0280473"/>
<dbReference type="dictyBase" id="DDB_G0280473">
    <property type="gene designation" value="hbx9"/>
</dbReference>
<dbReference type="VEuPathDB" id="AmoebaDB:DDB_G0280473"/>
<dbReference type="eggNOG" id="KOG0773">
    <property type="taxonomic scope" value="Eukaryota"/>
</dbReference>
<dbReference type="HOGENOM" id="CLU_428605_0_0_1"/>
<dbReference type="InParanoid" id="Q54VB4"/>
<dbReference type="OMA" id="PNIVMSG"/>
<dbReference type="PRO" id="PR:Q54VB4"/>
<dbReference type="Proteomes" id="UP000002195">
    <property type="component" value="Chromosome 3"/>
</dbReference>
<dbReference type="GO" id="GO:0005634">
    <property type="term" value="C:nucleus"/>
    <property type="evidence" value="ECO:0000318"/>
    <property type="project" value="GO_Central"/>
</dbReference>
<dbReference type="GO" id="GO:0000981">
    <property type="term" value="F:DNA-binding transcription factor activity, RNA polymerase II-specific"/>
    <property type="evidence" value="ECO:0000318"/>
    <property type="project" value="GO_Central"/>
</dbReference>
<dbReference type="GO" id="GO:0000978">
    <property type="term" value="F:RNA polymerase II cis-regulatory region sequence-specific DNA binding"/>
    <property type="evidence" value="ECO:0000318"/>
    <property type="project" value="GO_Central"/>
</dbReference>
<dbReference type="GO" id="GO:0048468">
    <property type="term" value="P:cell development"/>
    <property type="evidence" value="ECO:0000318"/>
    <property type="project" value="GO_Central"/>
</dbReference>
<dbReference type="GO" id="GO:0010628">
    <property type="term" value="P:positive regulation of gene expression"/>
    <property type="evidence" value="ECO:0000315"/>
    <property type="project" value="dictyBase"/>
</dbReference>
<dbReference type="GO" id="GO:0106070">
    <property type="term" value="P:regulation of adenylate cyclase-activating G protein-coupled receptor signaling pathway"/>
    <property type="evidence" value="ECO:0000315"/>
    <property type="project" value="dictyBase"/>
</dbReference>
<dbReference type="GO" id="GO:0006357">
    <property type="term" value="P:regulation of transcription by RNA polymerase II"/>
    <property type="evidence" value="ECO:0000318"/>
    <property type="project" value="GO_Central"/>
</dbReference>
<dbReference type="CDD" id="cd00086">
    <property type="entry name" value="homeodomain"/>
    <property type="match status" value="1"/>
</dbReference>
<dbReference type="Gene3D" id="1.10.10.60">
    <property type="entry name" value="Homeodomain-like"/>
    <property type="match status" value="1"/>
</dbReference>
<dbReference type="InterPro" id="IPR001356">
    <property type="entry name" value="HD"/>
</dbReference>
<dbReference type="InterPro" id="IPR009057">
    <property type="entry name" value="Homeodomain-like_sf"/>
</dbReference>
<dbReference type="InterPro" id="IPR050224">
    <property type="entry name" value="TALE_homeobox"/>
</dbReference>
<dbReference type="PANTHER" id="PTHR11850">
    <property type="entry name" value="HOMEOBOX PROTEIN TRANSCRIPTION FACTORS"/>
    <property type="match status" value="1"/>
</dbReference>
<dbReference type="Pfam" id="PF00046">
    <property type="entry name" value="Homeodomain"/>
    <property type="match status" value="1"/>
</dbReference>
<dbReference type="SMART" id="SM00389">
    <property type="entry name" value="HOX"/>
    <property type="match status" value="1"/>
</dbReference>
<dbReference type="SUPFAM" id="SSF46689">
    <property type="entry name" value="Homeodomain-like"/>
    <property type="match status" value="1"/>
</dbReference>
<dbReference type="PROSITE" id="PS50071">
    <property type="entry name" value="HOMEOBOX_2"/>
    <property type="match status" value="1"/>
</dbReference>
<name>HBX9_DICDI</name>
<comment type="function">
    <text evidence="1">Putative transcription factor.</text>
</comment>
<comment type="subcellular location">
    <subcellularLocation>
        <location evidence="3">Nucleus</location>
    </subcellularLocation>
</comment>
<feature type="chain" id="PRO_0000388793" description="Homeobox protein 9">
    <location>
        <begin position="1"/>
        <end position="639"/>
    </location>
</feature>
<feature type="DNA-binding region" description="Homeobox" evidence="3">
    <location>
        <begin position="559"/>
        <end position="621"/>
    </location>
</feature>
<feature type="region of interest" description="Disordered" evidence="4">
    <location>
        <begin position="1"/>
        <end position="45"/>
    </location>
</feature>
<feature type="region of interest" description="Disordered" evidence="4">
    <location>
        <begin position="66"/>
        <end position="144"/>
    </location>
</feature>
<feature type="region of interest" description="Disordered" evidence="4">
    <location>
        <begin position="157"/>
        <end position="179"/>
    </location>
</feature>
<feature type="region of interest" description="Disordered" evidence="4">
    <location>
        <begin position="262"/>
        <end position="313"/>
    </location>
</feature>
<feature type="region of interest" description="Disordered" evidence="4">
    <location>
        <begin position="331"/>
        <end position="422"/>
    </location>
</feature>
<feature type="region of interest" description="Disordered" evidence="4">
    <location>
        <begin position="436"/>
        <end position="547"/>
    </location>
</feature>
<feature type="coiled-coil region" evidence="2">
    <location>
        <begin position="72"/>
        <end position="109"/>
    </location>
</feature>
<feature type="coiled-coil region" evidence="2">
    <location>
        <begin position="152"/>
        <end position="184"/>
    </location>
</feature>
<feature type="coiled-coil region" evidence="2">
    <location>
        <begin position="230"/>
        <end position="296"/>
    </location>
</feature>
<feature type="coiled-coil region" evidence="2">
    <location>
        <begin position="365"/>
        <end position="396"/>
    </location>
</feature>
<feature type="compositionally biased region" description="Low complexity" evidence="4">
    <location>
        <begin position="73"/>
        <end position="119"/>
    </location>
</feature>
<feature type="compositionally biased region" description="Low complexity" evidence="4">
    <location>
        <begin position="126"/>
        <end position="142"/>
    </location>
</feature>
<feature type="compositionally biased region" description="Low complexity" evidence="4">
    <location>
        <begin position="266"/>
        <end position="300"/>
    </location>
</feature>
<feature type="compositionally biased region" description="Basic and acidic residues" evidence="4">
    <location>
        <begin position="345"/>
        <end position="354"/>
    </location>
</feature>
<feature type="compositionally biased region" description="Low complexity" evidence="4">
    <location>
        <begin position="358"/>
        <end position="399"/>
    </location>
</feature>
<feature type="compositionally biased region" description="Polar residues" evidence="4">
    <location>
        <begin position="405"/>
        <end position="422"/>
    </location>
</feature>
<feature type="compositionally biased region" description="Low complexity" evidence="4">
    <location>
        <begin position="436"/>
        <end position="526"/>
    </location>
</feature>
<feature type="compositionally biased region" description="Polar residues" evidence="4">
    <location>
        <begin position="532"/>
        <end position="547"/>
    </location>
</feature>